<sequence>MSIVMQLQDVAESTRLGPLSGEVRAGEILHLVGPNGAGKSTLLARMAGMTSGKGSIQFAGQPLEAWSATKLALHRAYLSQQQTPPFATPVWHYLTLHQHDKTRTELLNDVAGALALDDKLGRSTNQLSGGEWQRVRLAAVVLQITPQANPAGQLLLLDEPMNSLDVAQQSALDKILSALCQQGLAIVMSSHDLNHTLRHAHRAWLLKGGKMLASGRREEVLTPPNLAQAYGMNFRRLDIEGHRMLISTI</sequence>
<reference key="1">
    <citation type="journal article" date="1986" name="J. Bacteriol.">
        <title>Nucleotide sequence of the btuCED genes involved in vitamin B12 transport in Escherichia coli and homology with components of periplasmic-binding-protein-dependent transport systems.</title>
        <authorList>
            <person name="Friedrich M.J."/>
            <person name="Deveaux L.C."/>
            <person name="Kadner R.J."/>
        </authorList>
    </citation>
    <scope>NUCLEOTIDE SEQUENCE [GENOMIC DNA]</scope>
</reference>
<reference key="2">
    <citation type="journal article" date="1996" name="DNA Res.">
        <title>A 570-kb DNA sequence of the Escherichia coli K-12 genome corresponding to the 28.0-40.1 min region on the linkage map.</title>
        <authorList>
            <person name="Aiba H."/>
            <person name="Baba T."/>
            <person name="Fujita K."/>
            <person name="Hayashi K."/>
            <person name="Inada T."/>
            <person name="Isono K."/>
            <person name="Itoh T."/>
            <person name="Kasai H."/>
            <person name="Kashimoto K."/>
            <person name="Kimura S."/>
            <person name="Kitakawa M."/>
            <person name="Kitagawa M."/>
            <person name="Makino K."/>
            <person name="Miki T."/>
            <person name="Mizobuchi K."/>
            <person name="Mori H."/>
            <person name="Mori T."/>
            <person name="Motomura K."/>
            <person name="Nakade S."/>
            <person name="Nakamura Y."/>
            <person name="Nashimoto H."/>
            <person name="Nishio Y."/>
            <person name="Oshima T."/>
            <person name="Saito N."/>
            <person name="Sampei G."/>
            <person name="Seki Y."/>
            <person name="Sivasundaram S."/>
            <person name="Tagami H."/>
            <person name="Takeda J."/>
            <person name="Takemoto K."/>
            <person name="Takeuchi Y."/>
            <person name="Wada C."/>
            <person name="Yamamoto Y."/>
            <person name="Horiuchi T."/>
        </authorList>
    </citation>
    <scope>NUCLEOTIDE SEQUENCE [LARGE SCALE GENOMIC DNA]</scope>
    <source>
        <strain>K12 / W3110 / ATCC 27325 / DSM 5911</strain>
    </source>
</reference>
<reference key="3">
    <citation type="journal article" date="1997" name="Science">
        <title>The complete genome sequence of Escherichia coli K-12.</title>
        <authorList>
            <person name="Blattner F.R."/>
            <person name="Plunkett G. III"/>
            <person name="Bloch C.A."/>
            <person name="Perna N.T."/>
            <person name="Burland V."/>
            <person name="Riley M."/>
            <person name="Collado-Vides J."/>
            <person name="Glasner J.D."/>
            <person name="Rode C.K."/>
            <person name="Mayhew G.F."/>
            <person name="Gregor J."/>
            <person name="Davis N.W."/>
            <person name="Kirkpatrick H.A."/>
            <person name="Goeden M.A."/>
            <person name="Rose D.J."/>
            <person name="Mau B."/>
            <person name="Shao Y."/>
        </authorList>
    </citation>
    <scope>NUCLEOTIDE SEQUENCE [LARGE SCALE GENOMIC DNA]</scope>
    <source>
        <strain>K12 / MG1655 / ATCC 47076</strain>
    </source>
</reference>
<reference key="4">
    <citation type="journal article" date="2006" name="Mol. Syst. Biol.">
        <title>Highly accurate genome sequences of Escherichia coli K-12 strains MG1655 and W3110.</title>
        <authorList>
            <person name="Hayashi K."/>
            <person name="Morooka N."/>
            <person name="Yamamoto Y."/>
            <person name="Fujita K."/>
            <person name="Isono K."/>
            <person name="Choi S."/>
            <person name="Ohtsubo E."/>
            <person name="Baba T."/>
            <person name="Wanner B.L."/>
            <person name="Mori H."/>
            <person name="Horiuchi T."/>
        </authorList>
    </citation>
    <scope>NUCLEOTIDE SEQUENCE [LARGE SCALE GENOMIC DNA]</scope>
    <source>
        <strain>K12 / W3110 / ATCC 27325 / DSM 5911</strain>
    </source>
</reference>
<reference key="5">
    <citation type="journal article" date="2002" name="Science">
        <title>The E. coli BtuCD structure: a framework for ABC transporter architecture and mechanism.</title>
        <authorList>
            <person name="Locher K.P."/>
            <person name="Lee A.T."/>
            <person name="Rees D.C."/>
        </authorList>
    </citation>
    <scope>X-RAY CRYSTALLOGRAPHY (3.2 ANGSTROMS) IN COMPLEX WITH BTUC</scope>
</reference>
<proteinExistence type="evidence at protein level"/>
<dbReference type="EC" id="7.6.2.8" evidence="1"/>
<dbReference type="EMBL" id="M14031">
    <property type="protein sequence ID" value="AAA23528.1"/>
    <property type="molecule type" value="Genomic_DNA"/>
</dbReference>
<dbReference type="EMBL" id="U00096">
    <property type="protein sequence ID" value="AAC74779.1"/>
    <property type="molecule type" value="Genomic_DNA"/>
</dbReference>
<dbReference type="EMBL" id="AP009048">
    <property type="protein sequence ID" value="BAA15477.1"/>
    <property type="molecule type" value="Genomic_DNA"/>
</dbReference>
<dbReference type="PIR" id="C24498">
    <property type="entry name" value="QRECBD"/>
</dbReference>
<dbReference type="RefSeq" id="NP_416224.1">
    <property type="nucleotide sequence ID" value="NC_000913.3"/>
</dbReference>
<dbReference type="RefSeq" id="WP_000029474.1">
    <property type="nucleotide sequence ID" value="NZ_LN832404.1"/>
</dbReference>
<dbReference type="PDB" id="1L7V">
    <property type="method" value="X-ray"/>
    <property type="resolution" value="3.20 A"/>
    <property type="chains" value="C/D=1-249"/>
</dbReference>
<dbReference type="PDB" id="2QI9">
    <property type="method" value="X-ray"/>
    <property type="resolution" value="2.60 A"/>
    <property type="chains" value="C/D=1-249"/>
</dbReference>
<dbReference type="PDB" id="4DBL">
    <property type="method" value="X-ray"/>
    <property type="resolution" value="3.49 A"/>
    <property type="chains" value="C/D/H/I=1-249"/>
</dbReference>
<dbReference type="PDB" id="4FI3">
    <property type="method" value="X-ray"/>
    <property type="resolution" value="3.47 A"/>
    <property type="chains" value="C/D=1-249"/>
</dbReference>
<dbReference type="PDB" id="4R9U">
    <property type="method" value="X-ray"/>
    <property type="resolution" value="2.78 A"/>
    <property type="chains" value="C/D=1-249"/>
</dbReference>
<dbReference type="PDBsum" id="1L7V"/>
<dbReference type="PDBsum" id="2QI9"/>
<dbReference type="PDBsum" id="4DBL"/>
<dbReference type="PDBsum" id="4FI3"/>
<dbReference type="PDBsum" id="4R9U"/>
<dbReference type="SMR" id="P06611"/>
<dbReference type="BioGRID" id="4260301">
    <property type="interactions" value="194"/>
</dbReference>
<dbReference type="ComplexPortal" id="CPX-2105">
    <property type="entry name" value="Cobalamin ABC transporter complex"/>
</dbReference>
<dbReference type="ComplexPortal" id="CPX-2106">
    <property type="entry name" value="BtuCD complex"/>
</dbReference>
<dbReference type="DIP" id="DIP-9234N"/>
<dbReference type="FunCoup" id="P06611">
    <property type="interactions" value="233"/>
</dbReference>
<dbReference type="IntAct" id="P06611">
    <property type="interactions" value="9"/>
</dbReference>
<dbReference type="MINT" id="P06611"/>
<dbReference type="STRING" id="511145.b1709"/>
<dbReference type="TCDB" id="3.A.1.13.1">
    <property type="family name" value="the atp-binding cassette (abc) superfamily"/>
</dbReference>
<dbReference type="jPOST" id="P06611"/>
<dbReference type="PaxDb" id="511145-b1709"/>
<dbReference type="EnsemblBacteria" id="AAC74779">
    <property type="protein sequence ID" value="AAC74779"/>
    <property type="gene ID" value="b1709"/>
</dbReference>
<dbReference type="GeneID" id="945751"/>
<dbReference type="KEGG" id="ecj:JW1699"/>
<dbReference type="KEGG" id="eco:b1709"/>
<dbReference type="KEGG" id="ecoc:C3026_09785"/>
<dbReference type="PATRIC" id="fig|1411691.4.peg.548"/>
<dbReference type="EchoBASE" id="EB0126"/>
<dbReference type="eggNOG" id="COG4138">
    <property type="taxonomic scope" value="Bacteria"/>
</dbReference>
<dbReference type="HOGENOM" id="CLU_000604_1_11_6"/>
<dbReference type="InParanoid" id="P06611"/>
<dbReference type="OMA" id="CAHDLNH"/>
<dbReference type="OrthoDB" id="5292475at2"/>
<dbReference type="PhylomeDB" id="P06611"/>
<dbReference type="BioCyc" id="EcoCyc:BTUD-MONOMER"/>
<dbReference type="BioCyc" id="MetaCyc:BTUD-MONOMER"/>
<dbReference type="BRENDA" id="7.6.2.8">
    <property type="organism ID" value="2026"/>
</dbReference>
<dbReference type="EvolutionaryTrace" id="P06611"/>
<dbReference type="PRO" id="PR:P06611"/>
<dbReference type="Proteomes" id="UP000000625">
    <property type="component" value="Chromosome"/>
</dbReference>
<dbReference type="GO" id="GO:0043190">
    <property type="term" value="C:ATP-binding cassette (ABC) transporter complex"/>
    <property type="evidence" value="ECO:0000314"/>
    <property type="project" value="EcoCyc"/>
</dbReference>
<dbReference type="GO" id="GO:1990193">
    <property type="term" value="C:BtuCD complex"/>
    <property type="evidence" value="ECO:0000353"/>
    <property type="project" value="ComplexPortal"/>
</dbReference>
<dbReference type="GO" id="GO:1990191">
    <property type="term" value="C:cobalamin transport complex"/>
    <property type="evidence" value="ECO:0000353"/>
    <property type="project" value="ComplexPortal"/>
</dbReference>
<dbReference type="GO" id="GO:0019898">
    <property type="term" value="C:extrinsic component of membrane"/>
    <property type="evidence" value="ECO:0000314"/>
    <property type="project" value="EcoliWiki"/>
</dbReference>
<dbReference type="GO" id="GO:0016020">
    <property type="term" value="C:membrane"/>
    <property type="evidence" value="ECO:0000314"/>
    <property type="project" value="ComplexPortal"/>
</dbReference>
<dbReference type="GO" id="GO:0015420">
    <property type="term" value="F:ABC-type vitamin B12 transporter activity"/>
    <property type="evidence" value="ECO:0000314"/>
    <property type="project" value="EcoCyc"/>
</dbReference>
<dbReference type="GO" id="GO:0005524">
    <property type="term" value="F:ATP binding"/>
    <property type="evidence" value="ECO:0000255"/>
    <property type="project" value="EcoCyc"/>
</dbReference>
<dbReference type="GO" id="GO:0016887">
    <property type="term" value="F:ATP hydrolysis activity"/>
    <property type="evidence" value="ECO:0007669"/>
    <property type="project" value="InterPro"/>
</dbReference>
<dbReference type="GO" id="GO:0042626">
    <property type="term" value="F:ATPase-coupled transmembrane transporter activity"/>
    <property type="evidence" value="ECO:0000318"/>
    <property type="project" value="GO_Central"/>
</dbReference>
<dbReference type="GO" id="GO:0015889">
    <property type="term" value="P:cobalamin transport"/>
    <property type="evidence" value="ECO:0000314"/>
    <property type="project" value="EcoCyc"/>
</dbReference>
<dbReference type="CDD" id="cd03214">
    <property type="entry name" value="ABC_Iron-Siderophores_B12_Hemin"/>
    <property type="match status" value="1"/>
</dbReference>
<dbReference type="FunFam" id="3.40.50.300:FF:000462">
    <property type="entry name" value="Vitamin B12 import ATP-binding protein BtuD"/>
    <property type="match status" value="1"/>
</dbReference>
<dbReference type="Gene3D" id="3.40.50.300">
    <property type="entry name" value="P-loop containing nucleotide triphosphate hydrolases"/>
    <property type="match status" value="1"/>
</dbReference>
<dbReference type="HAMAP" id="MF_01005">
    <property type="entry name" value="BtuD"/>
    <property type="match status" value="1"/>
</dbReference>
<dbReference type="InterPro" id="IPR003593">
    <property type="entry name" value="AAA+_ATPase"/>
</dbReference>
<dbReference type="InterPro" id="IPR003439">
    <property type="entry name" value="ABC_transporter-like_ATP-bd"/>
</dbReference>
<dbReference type="InterPro" id="IPR017871">
    <property type="entry name" value="ABC_transporter-like_CS"/>
</dbReference>
<dbReference type="InterPro" id="IPR023693">
    <property type="entry name" value="ABC_transptr_BtuD"/>
</dbReference>
<dbReference type="InterPro" id="IPR050153">
    <property type="entry name" value="Metal_Ion_Import_ABC"/>
</dbReference>
<dbReference type="InterPro" id="IPR027417">
    <property type="entry name" value="P-loop_NTPase"/>
</dbReference>
<dbReference type="NCBIfam" id="NF002981">
    <property type="entry name" value="PRK03695.1"/>
    <property type="match status" value="1"/>
</dbReference>
<dbReference type="PANTHER" id="PTHR42734">
    <property type="entry name" value="METAL TRANSPORT SYSTEM ATP-BINDING PROTEIN TM_0124-RELATED"/>
    <property type="match status" value="1"/>
</dbReference>
<dbReference type="PANTHER" id="PTHR42734:SF18">
    <property type="entry name" value="VITAMIN B12 IMPORT ATP-BINDING PROTEIN BTUD"/>
    <property type="match status" value="1"/>
</dbReference>
<dbReference type="Pfam" id="PF00005">
    <property type="entry name" value="ABC_tran"/>
    <property type="match status" value="1"/>
</dbReference>
<dbReference type="SMART" id="SM00382">
    <property type="entry name" value="AAA"/>
    <property type="match status" value="1"/>
</dbReference>
<dbReference type="SUPFAM" id="SSF52540">
    <property type="entry name" value="P-loop containing nucleoside triphosphate hydrolases"/>
    <property type="match status" value="1"/>
</dbReference>
<dbReference type="PROSITE" id="PS00211">
    <property type="entry name" value="ABC_TRANSPORTER_1"/>
    <property type="match status" value="1"/>
</dbReference>
<dbReference type="PROSITE" id="PS50893">
    <property type="entry name" value="ABC_TRANSPORTER_2"/>
    <property type="match status" value="1"/>
</dbReference>
<gene>
    <name evidence="1" type="primary">btuD</name>
    <name type="ordered locus">b1709</name>
    <name type="ordered locus">JW1699</name>
</gene>
<organism>
    <name type="scientific">Escherichia coli (strain K12)</name>
    <dbReference type="NCBI Taxonomy" id="83333"/>
    <lineage>
        <taxon>Bacteria</taxon>
        <taxon>Pseudomonadati</taxon>
        <taxon>Pseudomonadota</taxon>
        <taxon>Gammaproteobacteria</taxon>
        <taxon>Enterobacterales</taxon>
        <taxon>Enterobacteriaceae</taxon>
        <taxon>Escherichia</taxon>
    </lineage>
</organism>
<evidence type="ECO:0000255" key="1">
    <source>
        <dbReference type="HAMAP-Rule" id="MF_01005"/>
    </source>
</evidence>
<evidence type="ECO:0000269" key="2">
    <source>
    </source>
</evidence>
<evidence type="ECO:0007829" key="3">
    <source>
        <dbReference type="PDB" id="2QI9"/>
    </source>
</evidence>
<evidence type="ECO:0007829" key="4">
    <source>
        <dbReference type="PDB" id="4DBL"/>
    </source>
</evidence>
<comment type="function">
    <text evidence="1">Part of the ABC transporter complex BtuCDF involved in vitamin B12 import. Responsible for energy coupling to the transport system.</text>
</comment>
<comment type="catalytic activity">
    <reaction evidence="1">
        <text>an R-cob(III)alamin(out) + ATP + H2O = an R-cob(III)alamin(in) + ADP + phosphate + H(+)</text>
        <dbReference type="Rhea" id="RHEA:17873"/>
        <dbReference type="ChEBI" id="CHEBI:15377"/>
        <dbReference type="ChEBI" id="CHEBI:15378"/>
        <dbReference type="ChEBI" id="CHEBI:30616"/>
        <dbReference type="ChEBI" id="CHEBI:43474"/>
        <dbReference type="ChEBI" id="CHEBI:140785"/>
        <dbReference type="ChEBI" id="CHEBI:456216"/>
        <dbReference type="EC" id="7.6.2.8"/>
    </reaction>
</comment>
<comment type="subunit">
    <text evidence="1 2">The complex is composed of two ATP-binding proteins (BtuD), two transmembrane proteins (BtuC) and a solute-binding protein (BtuF).</text>
</comment>
<comment type="interaction">
    <interactant intactId="EBI-1033420">
        <id>P06611</id>
    </interactant>
    <interactant intactId="EBI-1033427">
        <id>P06609</id>
        <label>btuC</label>
    </interactant>
    <organismsDiffer>false</organismsDiffer>
    <experiments>13</experiments>
</comment>
<comment type="subcellular location">
    <subcellularLocation>
        <location>Cell inner membrane</location>
        <topology>Peripheral membrane protein</topology>
    </subcellularLocation>
</comment>
<comment type="similarity">
    <text evidence="1">Belongs to the ABC transporter superfamily. Vitamin B12 importer (TC 3.A.1.13.1) family.</text>
</comment>
<feature type="chain" id="PRO_0000091950" description="Vitamin B12 import ATP-binding protein BtuD">
    <location>
        <begin position="1"/>
        <end position="249"/>
    </location>
</feature>
<feature type="domain" description="ABC transporter" evidence="1">
    <location>
        <begin position="1"/>
        <end position="233"/>
    </location>
</feature>
<feature type="binding site" evidence="1">
    <location>
        <begin position="33"/>
        <end position="40"/>
    </location>
    <ligand>
        <name>ATP</name>
        <dbReference type="ChEBI" id="CHEBI:30616"/>
    </ligand>
</feature>
<feature type="strand" evidence="3">
    <location>
        <begin position="3"/>
        <end position="12"/>
    </location>
</feature>
<feature type="turn" evidence="3">
    <location>
        <begin position="13"/>
        <end position="15"/>
    </location>
</feature>
<feature type="strand" evidence="3">
    <location>
        <begin position="16"/>
        <end position="24"/>
    </location>
</feature>
<feature type="strand" evidence="3">
    <location>
        <begin position="28"/>
        <end position="32"/>
    </location>
</feature>
<feature type="helix" evidence="3">
    <location>
        <begin position="39"/>
        <end position="46"/>
    </location>
</feature>
<feature type="strand" evidence="3">
    <location>
        <begin position="53"/>
        <end position="58"/>
    </location>
</feature>
<feature type="helix" evidence="3">
    <location>
        <begin position="63"/>
        <end position="65"/>
    </location>
</feature>
<feature type="helix" evidence="3">
    <location>
        <begin position="68"/>
        <end position="74"/>
    </location>
</feature>
<feature type="strand" evidence="3">
    <location>
        <begin position="75"/>
        <end position="78"/>
    </location>
</feature>
<feature type="helix" evidence="3">
    <location>
        <begin position="90"/>
        <end position="95"/>
    </location>
</feature>
<feature type="helix" evidence="3">
    <location>
        <begin position="104"/>
        <end position="113"/>
    </location>
</feature>
<feature type="helix" evidence="3">
    <location>
        <begin position="117"/>
        <end position="119"/>
    </location>
</feature>
<feature type="strand" evidence="4">
    <location>
        <begin position="120"/>
        <end position="123"/>
    </location>
</feature>
<feature type="helix" evidence="3">
    <location>
        <begin position="124"/>
        <end position="126"/>
    </location>
</feature>
<feature type="helix" evidence="3">
    <location>
        <begin position="129"/>
        <end position="144"/>
    </location>
</feature>
<feature type="turn" evidence="3">
    <location>
        <begin position="146"/>
        <end position="148"/>
    </location>
</feature>
<feature type="strand" evidence="3">
    <location>
        <begin position="154"/>
        <end position="159"/>
    </location>
</feature>
<feature type="turn" evidence="3">
    <location>
        <begin position="160"/>
        <end position="163"/>
    </location>
</feature>
<feature type="helix" evidence="3">
    <location>
        <begin position="166"/>
        <end position="181"/>
    </location>
</feature>
<feature type="strand" evidence="3">
    <location>
        <begin position="185"/>
        <end position="189"/>
    </location>
</feature>
<feature type="helix" evidence="3">
    <location>
        <begin position="193"/>
        <end position="199"/>
    </location>
</feature>
<feature type="strand" evidence="3">
    <location>
        <begin position="201"/>
        <end position="207"/>
    </location>
</feature>
<feature type="strand" evidence="3">
    <location>
        <begin position="210"/>
        <end position="216"/>
    </location>
</feature>
<feature type="helix" evidence="3">
    <location>
        <begin position="217"/>
        <end position="220"/>
    </location>
</feature>
<feature type="helix" evidence="3">
    <location>
        <begin position="223"/>
        <end position="230"/>
    </location>
</feature>
<feature type="strand" evidence="3">
    <location>
        <begin position="234"/>
        <end position="239"/>
    </location>
</feature>
<feature type="strand" evidence="3">
    <location>
        <begin position="242"/>
        <end position="247"/>
    </location>
</feature>
<name>BTUD_ECOLI</name>
<accession>P06611</accession>
<keyword id="KW-0002">3D-structure</keyword>
<keyword id="KW-0067">ATP-binding</keyword>
<keyword id="KW-0997">Cell inner membrane</keyword>
<keyword id="KW-1003">Cell membrane</keyword>
<keyword id="KW-0472">Membrane</keyword>
<keyword id="KW-0547">Nucleotide-binding</keyword>
<keyword id="KW-1185">Reference proteome</keyword>
<keyword id="KW-1278">Translocase</keyword>
<keyword id="KW-0813">Transport</keyword>
<protein>
    <recommendedName>
        <fullName evidence="1">Vitamin B12 import ATP-binding protein BtuD</fullName>
        <ecNumber evidence="1">7.6.2.8</ecNumber>
    </recommendedName>
    <alternativeName>
        <fullName evidence="1">Vitamin B12-transporting ATPase</fullName>
    </alternativeName>
</protein>